<accession>Q914L4</accession>
<feature type="chain" id="PRO_0000385433" description="Uncharacterized protein 16">
    <location>
        <begin position="1"/>
        <end position="250"/>
    </location>
</feature>
<name>Y016_SIFVH</name>
<protein>
    <recommendedName>
        <fullName>Uncharacterized protein 16</fullName>
    </recommendedName>
</protein>
<keyword id="KW-1185">Reference proteome</keyword>
<gene>
    <name type="primary">SIFV0016</name>
</gene>
<proteinExistence type="predicted"/>
<organism>
    <name type="scientific">Sulfolobus islandicus filamentous virus (isolate Iceland/Hveragerdi)</name>
    <name type="common">SIFV</name>
    <dbReference type="NCBI Taxonomy" id="654908"/>
    <lineage>
        <taxon>Viruses</taxon>
        <taxon>Adnaviria</taxon>
        <taxon>Zilligvirae</taxon>
        <taxon>Taleaviricota</taxon>
        <taxon>Tokiviricetes</taxon>
        <taxon>Ligamenvirales</taxon>
        <taxon>Lipothrixviridae</taxon>
        <taxon>Betalipothrixvirus</taxon>
        <taxon>Sulfolobus islandicus filamentous virus</taxon>
    </lineage>
</organism>
<sequence length="250" mass="29768">MYIFLMYGLEVKQLKLLYNLPKVFLTPNLNKFSITRNYVDCAYYESRSGLTREGCIIFDGNVHRTRGIYYIPVPSAVELSYRRKMIKDEQDVKQIIEKINLYGATLNTNKLLVKWNNYEIILYDRFIKGGMYEFPLLFSQGHLYVYNIPRVREAYRIIYENDNQKEEIDSEMFEEINEFSVYNHAIKFDKKVLKLKELYVSPGQGVVIYTLDDVTLVSESPDHNKIEKFVYKNSWILFSHRAPRNQDQRD</sequence>
<dbReference type="EMBL" id="AF440571">
    <property type="protein sequence ID" value="AAL27727.1"/>
    <property type="molecule type" value="Genomic_DNA"/>
</dbReference>
<dbReference type="RefSeq" id="NP_445681.1">
    <property type="nucleotide sequence ID" value="NC_003214.2"/>
</dbReference>
<dbReference type="GeneID" id="922307"/>
<dbReference type="KEGG" id="vg:922307"/>
<dbReference type="Proteomes" id="UP000007017">
    <property type="component" value="Segment"/>
</dbReference>
<reference key="1">
    <citation type="journal article" date="2000" name="Virology">
        <title>A novel lipothrixvirus, SIFV, of the extremely thermophilic crenarchaeon Sulfolobus.</title>
        <authorList>
            <person name="Arnold H.P."/>
            <person name="Zillig W."/>
            <person name="Ziese U."/>
            <person name="Holz I."/>
            <person name="Crosby M."/>
            <person name="Utterback T."/>
            <person name="Weidmann J.F."/>
            <person name="Umayam L.A."/>
            <person name="Teffera K."/>
            <person name="Kristjanson J.K."/>
            <person name="Klenk H.P."/>
            <person name="Nelson K.E."/>
            <person name="Fraser C.M."/>
        </authorList>
    </citation>
    <scope>NUCLEOTIDE SEQUENCE [GENOMIC DNA]</scope>
</reference>
<organismHost>
    <name type="scientific">Saccharolobus islandicus</name>
    <name type="common">Sulfolobus islandicus</name>
    <dbReference type="NCBI Taxonomy" id="43080"/>
</organismHost>